<name>BIOB_HAEIG</name>
<comment type="function">
    <text evidence="1">Catalyzes the conversion of dethiobiotin (DTB) to biotin by the insertion of a sulfur atom into dethiobiotin via a radical-based mechanism.</text>
</comment>
<comment type="catalytic activity">
    <reaction evidence="1">
        <text>(4R,5S)-dethiobiotin + (sulfur carrier)-SH + 2 reduced [2Fe-2S]-[ferredoxin] + 2 S-adenosyl-L-methionine = (sulfur carrier)-H + biotin + 2 5'-deoxyadenosine + 2 L-methionine + 2 oxidized [2Fe-2S]-[ferredoxin]</text>
        <dbReference type="Rhea" id="RHEA:22060"/>
        <dbReference type="Rhea" id="RHEA-COMP:10000"/>
        <dbReference type="Rhea" id="RHEA-COMP:10001"/>
        <dbReference type="Rhea" id="RHEA-COMP:14737"/>
        <dbReference type="Rhea" id="RHEA-COMP:14739"/>
        <dbReference type="ChEBI" id="CHEBI:17319"/>
        <dbReference type="ChEBI" id="CHEBI:29917"/>
        <dbReference type="ChEBI" id="CHEBI:33737"/>
        <dbReference type="ChEBI" id="CHEBI:33738"/>
        <dbReference type="ChEBI" id="CHEBI:57586"/>
        <dbReference type="ChEBI" id="CHEBI:57844"/>
        <dbReference type="ChEBI" id="CHEBI:59789"/>
        <dbReference type="ChEBI" id="CHEBI:64428"/>
        <dbReference type="ChEBI" id="CHEBI:149473"/>
        <dbReference type="EC" id="2.8.1.6"/>
    </reaction>
</comment>
<comment type="cofactor">
    <cofactor evidence="1">
        <name>[4Fe-4S] cluster</name>
        <dbReference type="ChEBI" id="CHEBI:49883"/>
    </cofactor>
    <text evidence="1">Binds 1 [4Fe-4S] cluster. The cluster is coordinated with 3 cysteines and an exchangeable S-adenosyl-L-methionine.</text>
</comment>
<comment type="cofactor">
    <cofactor evidence="1">
        <name>[2Fe-2S] cluster</name>
        <dbReference type="ChEBI" id="CHEBI:190135"/>
    </cofactor>
    <text evidence="1">Binds 1 [2Fe-2S] cluster. The cluster is coordinated with 3 cysteines and 1 arginine.</text>
</comment>
<comment type="pathway">
    <text evidence="1">Cofactor biosynthesis; biotin biosynthesis; biotin from 7,8-diaminononanoate: step 2/2.</text>
</comment>
<comment type="subunit">
    <text evidence="1">Homodimer.</text>
</comment>
<comment type="similarity">
    <text evidence="1">Belongs to the radical SAM superfamily. Biotin synthase family.</text>
</comment>
<gene>
    <name evidence="1" type="primary">bioB</name>
    <name type="synonym">thiP</name>
    <name type="ordered locus">CGSHiGG_08725</name>
</gene>
<feature type="chain" id="PRO_0000381416" description="Biotin synthase">
    <location>
        <begin position="1"/>
        <end position="332"/>
    </location>
</feature>
<feature type="domain" description="Radical SAM core" evidence="2">
    <location>
        <begin position="51"/>
        <end position="278"/>
    </location>
</feature>
<feature type="binding site" evidence="1">
    <location>
        <position position="66"/>
    </location>
    <ligand>
        <name>[4Fe-4S] cluster</name>
        <dbReference type="ChEBI" id="CHEBI:49883"/>
        <note>4Fe-4S-S-AdoMet</note>
    </ligand>
</feature>
<feature type="binding site" evidence="1">
    <location>
        <position position="70"/>
    </location>
    <ligand>
        <name>[4Fe-4S] cluster</name>
        <dbReference type="ChEBI" id="CHEBI:49883"/>
        <note>4Fe-4S-S-AdoMet</note>
    </ligand>
</feature>
<feature type="binding site" evidence="1">
    <location>
        <position position="73"/>
    </location>
    <ligand>
        <name>[4Fe-4S] cluster</name>
        <dbReference type="ChEBI" id="CHEBI:49883"/>
        <note>4Fe-4S-S-AdoMet</note>
    </ligand>
</feature>
<feature type="binding site" evidence="1">
    <location>
        <position position="110"/>
    </location>
    <ligand>
        <name>[2Fe-2S] cluster</name>
        <dbReference type="ChEBI" id="CHEBI:190135"/>
    </ligand>
</feature>
<feature type="binding site" evidence="1">
    <location>
        <position position="141"/>
    </location>
    <ligand>
        <name>[2Fe-2S] cluster</name>
        <dbReference type="ChEBI" id="CHEBI:190135"/>
    </ligand>
</feature>
<feature type="binding site" evidence="1">
    <location>
        <position position="201"/>
    </location>
    <ligand>
        <name>[2Fe-2S] cluster</name>
        <dbReference type="ChEBI" id="CHEBI:190135"/>
    </ligand>
</feature>
<feature type="binding site" evidence="1">
    <location>
        <position position="273"/>
    </location>
    <ligand>
        <name>[2Fe-2S] cluster</name>
        <dbReference type="ChEBI" id="CHEBI:190135"/>
    </ligand>
</feature>
<sequence>MLAEKLQINSITPHPSVEYWSVCKVEALFETPFLELVYRAAQIHRKHFNSRTIQLSTLMSIKTGGCPEDCGYCPQSARYHTGVQNQQLLDVNEIIAKAKIAKARGAGRFCMGAAWRGPKPKDIEKVTEIIKAVKSLGLETCGTFGLLQDGMAEDLKEAGLDYYNHNLDTAPEHYAEVIGTRRFDDRLSTLGKVRKAGLKVCCGGIVGMNETRKERAGLIASLANLDPQPESVPINQLVKVEGTPLADAEELDWTEFVRTIAVARITMPKSYVRLSAGRSGMTEEMQAMCFMAGANSIFYGDKLLVTDNPEEDGDQLLMAKLDLEPETAENKK</sequence>
<reference key="1">
    <citation type="journal article" date="2007" name="Genome Biol.">
        <title>Characterization and modeling of the Haemophilus influenzae core and supragenomes based on the complete genomic sequences of Rd and 12 clinical nontypeable strains.</title>
        <authorList>
            <person name="Hogg J.S."/>
            <person name="Hu F.Z."/>
            <person name="Janto B."/>
            <person name="Boissy R."/>
            <person name="Hayes J."/>
            <person name="Keefe R."/>
            <person name="Post J.C."/>
            <person name="Ehrlich G.D."/>
        </authorList>
    </citation>
    <scope>NUCLEOTIDE SEQUENCE [LARGE SCALE GENOMIC DNA]</scope>
    <source>
        <strain>PittGG</strain>
    </source>
</reference>
<dbReference type="EC" id="2.8.1.6" evidence="1"/>
<dbReference type="EMBL" id="CP000672">
    <property type="protein sequence ID" value="ABR00559.1"/>
    <property type="molecule type" value="Genomic_DNA"/>
</dbReference>
<dbReference type="SMR" id="A5UIF3"/>
<dbReference type="KEGG" id="hiq:CGSHiGG_08725"/>
<dbReference type="HOGENOM" id="CLU_033172_1_2_6"/>
<dbReference type="UniPathway" id="UPA00078">
    <property type="reaction ID" value="UER00162"/>
</dbReference>
<dbReference type="Proteomes" id="UP000001990">
    <property type="component" value="Chromosome"/>
</dbReference>
<dbReference type="GO" id="GO:0051537">
    <property type="term" value="F:2 iron, 2 sulfur cluster binding"/>
    <property type="evidence" value="ECO:0007669"/>
    <property type="project" value="UniProtKB-KW"/>
</dbReference>
<dbReference type="GO" id="GO:0051539">
    <property type="term" value="F:4 iron, 4 sulfur cluster binding"/>
    <property type="evidence" value="ECO:0007669"/>
    <property type="project" value="UniProtKB-KW"/>
</dbReference>
<dbReference type="GO" id="GO:0004076">
    <property type="term" value="F:biotin synthase activity"/>
    <property type="evidence" value="ECO:0007669"/>
    <property type="project" value="UniProtKB-UniRule"/>
</dbReference>
<dbReference type="GO" id="GO:0005506">
    <property type="term" value="F:iron ion binding"/>
    <property type="evidence" value="ECO:0007669"/>
    <property type="project" value="UniProtKB-UniRule"/>
</dbReference>
<dbReference type="GO" id="GO:0009102">
    <property type="term" value="P:biotin biosynthetic process"/>
    <property type="evidence" value="ECO:0007669"/>
    <property type="project" value="UniProtKB-UniRule"/>
</dbReference>
<dbReference type="CDD" id="cd01335">
    <property type="entry name" value="Radical_SAM"/>
    <property type="match status" value="1"/>
</dbReference>
<dbReference type="FunFam" id="3.20.20.70:FF:000011">
    <property type="entry name" value="Biotin synthase"/>
    <property type="match status" value="1"/>
</dbReference>
<dbReference type="Gene3D" id="3.20.20.70">
    <property type="entry name" value="Aldolase class I"/>
    <property type="match status" value="1"/>
</dbReference>
<dbReference type="HAMAP" id="MF_01694">
    <property type="entry name" value="BioB"/>
    <property type="match status" value="1"/>
</dbReference>
<dbReference type="InterPro" id="IPR013785">
    <property type="entry name" value="Aldolase_TIM"/>
</dbReference>
<dbReference type="InterPro" id="IPR010722">
    <property type="entry name" value="BATS_dom"/>
</dbReference>
<dbReference type="InterPro" id="IPR002684">
    <property type="entry name" value="Biotin_synth/BioAB"/>
</dbReference>
<dbReference type="InterPro" id="IPR024177">
    <property type="entry name" value="Biotin_synthase"/>
</dbReference>
<dbReference type="InterPro" id="IPR006638">
    <property type="entry name" value="Elp3/MiaA/NifB-like_rSAM"/>
</dbReference>
<dbReference type="InterPro" id="IPR007197">
    <property type="entry name" value="rSAM"/>
</dbReference>
<dbReference type="NCBIfam" id="TIGR00433">
    <property type="entry name" value="bioB"/>
    <property type="match status" value="1"/>
</dbReference>
<dbReference type="PANTHER" id="PTHR22976">
    <property type="entry name" value="BIOTIN SYNTHASE"/>
    <property type="match status" value="1"/>
</dbReference>
<dbReference type="PANTHER" id="PTHR22976:SF2">
    <property type="entry name" value="BIOTIN SYNTHASE, MITOCHONDRIAL"/>
    <property type="match status" value="1"/>
</dbReference>
<dbReference type="Pfam" id="PF06968">
    <property type="entry name" value="BATS"/>
    <property type="match status" value="1"/>
</dbReference>
<dbReference type="Pfam" id="PF04055">
    <property type="entry name" value="Radical_SAM"/>
    <property type="match status" value="1"/>
</dbReference>
<dbReference type="PIRSF" id="PIRSF001619">
    <property type="entry name" value="Biotin_synth"/>
    <property type="match status" value="1"/>
</dbReference>
<dbReference type="SFLD" id="SFLDF00272">
    <property type="entry name" value="biotin_synthase"/>
    <property type="match status" value="1"/>
</dbReference>
<dbReference type="SFLD" id="SFLDG01278">
    <property type="entry name" value="biotin_synthase_like"/>
    <property type="match status" value="1"/>
</dbReference>
<dbReference type="SMART" id="SM00876">
    <property type="entry name" value="BATS"/>
    <property type="match status" value="1"/>
</dbReference>
<dbReference type="SMART" id="SM00729">
    <property type="entry name" value="Elp3"/>
    <property type="match status" value="1"/>
</dbReference>
<dbReference type="SUPFAM" id="SSF102114">
    <property type="entry name" value="Radical SAM enzymes"/>
    <property type="match status" value="1"/>
</dbReference>
<dbReference type="PROSITE" id="PS51918">
    <property type="entry name" value="RADICAL_SAM"/>
    <property type="match status" value="1"/>
</dbReference>
<proteinExistence type="inferred from homology"/>
<evidence type="ECO:0000255" key="1">
    <source>
        <dbReference type="HAMAP-Rule" id="MF_01694"/>
    </source>
</evidence>
<evidence type="ECO:0000255" key="2">
    <source>
        <dbReference type="PROSITE-ProRule" id="PRU01266"/>
    </source>
</evidence>
<keyword id="KW-0001">2Fe-2S</keyword>
<keyword id="KW-0004">4Fe-4S</keyword>
<keyword id="KW-0093">Biotin biosynthesis</keyword>
<keyword id="KW-0408">Iron</keyword>
<keyword id="KW-0411">Iron-sulfur</keyword>
<keyword id="KW-0479">Metal-binding</keyword>
<keyword id="KW-0949">S-adenosyl-L-methionine</keyword>
<keyword id="KW-0808">Transferase</keyword>
<organism>
    <name type="scientific">Haemophilus influenzae (strain PittGG)</name>
    <dbReference type="NCBI Taxonomy" id="374931"/>
    <lineage>
        <taxon>Bacteria</taxon>
        <taxon>Pseudomonadati</taxon>
        <taxon>Pseudomonadota</taxon>
        <taxon>Gammaproteobacteria</taxon>
        <taxon>Pasteurellales</taxon>
        <taxon>Pasteurellaceae</taxon>
        <taxon>Haemophilus</taxon>
    </lineage>
</organism>
<accession>A5UIF3</accession>
<protein>
    <recommendedName>
        <fullName evidence="1">Biotin synthase</fullName>
        <ecNumber evidence="1">2.8.1.6</ecNumber>
    </recommendedName>
</protein>